<reference key="1">
    <citation type="journal article" date="2008" name="Nucleic Acids Res.">
        <title>The complete nucleotide sequences of the five genetically distinct plastid genomes of Oenothera, subsection Oenothera: I. Sequence evaluation and plastome evolution.</title>
        <authorList>
            <person name="Greiner S."/>
            <person name="Wang X."/>
            <person name="Rauwolf U."/>
            <person name="Silber M.V."/>
            <person name="Mayer K."/>
            <person name="Meurer J."/>
            <person name="Haberer G."/>
            <person name="Herrmann R.G."/>
        </authorList>
    </citation>
    <scope>NUCLEOTIDE SEQUENCE [LARGE SCALE GENOMIC DNA]</scope>
    <source>
        <strain>cv. Suaveolens Grado</strain>
    </source>
</reference>
<comment type="function">
    <text evidence="1">NDH shuttles electrons from NAD(P)H:plastoquinone, via FMN and iron-sulfur (Fe-S) centers, to quinones in the photosynthetic chain and possibly in a chloroplast respiratory chain. The immediate electron acceptor for the enzyme in this species is believed to be plastoquinone. Couples the redox reaction to proton translocation, and thus conserves the redox energy in a proton gradient.</text>
</comment>
<comment type="catalytic activity">
    <reaction evidence="1">
        <text>a plastoquinone + NADH + (n+1) H(+)(in) = a plastoquinol + NAD(+) + n H(+)(out)</text>
        <dbReference type="Rhea" id="RHEA:42608"/>
        <dbReference type="Rhea" id="RHEA-COMP:9561"/>
        <dbReference type="Rhea" id="RHEA-COMP:9562"/>
        <dbReference type="ChEBI" id="CHEBI:15378"/>
        <dbReference type="ChEBI" id="CHEBI:17757"/>
        <dbReference type="ChEBI" id="CHEBI:57540"/>
        <dbReference type="ChEBI" id="CHEBI:57945"/>
        <dbReference type="ChEBI" id="CHEBI:62192"/>
    </reaction>
</comment>
<comment type="catalytic activity">
    <reaction evidence="1">
        <text>a plastoquinone + NADPH + (n+1) H(+)(in) = a plastoquinol + NADP(+) + n H(+)(out)</text>
        <dbReference type="Rhea" id="RHEA:42612"/>
        <dbReference type="Rhea" id="RHEA-COMP:9561"/>
        <dbReference type="Rhea" id="RHEA-COMP:9562"/>
        <dbReference type="ChEBI" id="CHEBI:15378"/>
        <dbReference type="ChEBI" id="CHEBI:17757"/>
        <dbReference type="ChEBI" id="CHEBI:57783"/>
        <dbReference type="ChEBI" id="CHEBI:58349"/>
        <dbReference type="ChEBI" id="CHEBI:62192"/>
    </reaction>
</comment>
<comment type="subunit">
    <text evidence="1">NDH is composed of at least 16 different subunits, 5 of which are encoded in the nucleus.</text>
</comment>
<comment type="subcellular location">
    <subcellularLocation>
        <location evidence="1">Plastid</location>
        <location evidence="1">Chloroplast thylakoid membrane</location>
        <topology evidence="1">Multi-pass membrane protein</topology>
    </subcellularLocation>
</comment>
<comment type="similarity">
    <text evidence="1">Belongs to the complex I subunit 2 family.</text>
</comment>
<gene>
    <name evidence="1" type="primary">ndhB2</name>
</gene>
<sequence length="510" mass="56573">MIWHVQNENLILDSTRIFMKAFHLPLFDGSFIFPEGILIFGLILLLMIDSTSDQTDIPWFYFISSISLVMSITALLFRWREEPRILFSGNFQTNNFNEIFQFLILLCSTLCIPLSVEYIECTEMAITEFLLFVLTATLGGMFLCGANDLITIFVAPECFSLCSYLLSGYTKKDVRSNEATMKYLLMGGASSSILVHGFSWLYGSSGGEIELQEIVNGLINTQMYNSPGISIALIFITVGIGFKLSPAPSHQWTPDVYEGSPTPVVAFLSVTSKVAASASATRIFDIPFYFSSNEWHPLLEILAILSMILGNLIAITQTSMKRMLAYSSIGQIGYVIIGIIVGDANGGYASMITYMLFYISMNLGTFACIVLFGLRTGTDNIRDYAGLYTKDPFLALSLALCLLSLGGLPPLAGFFGKLHLFWCGWQAGLYFLVSIGLFTSVVSIYYYLKIIKLLMTGRKQEITPHVRNYRRSPLRSNNSIELSMIVCVIASTIPGISMNPIIAIAQDTLF</sequence>
<dbReference type="EC" id="7.1.1.-" evidence="1"/>
<dbReference type="EMBL" id="EU262889">
    <property type="protein sequence ID" value="ABW98931.1"/>
    <property type="molecule type" value="Genomic_DNA"/>
</dbReference>
<dbReference type="SMR" id="P0CD09"/>
<dbReference type="GO" id="GO:0009535">
    <property type="term" value="C:chloroplast thylakoid membrane"/>
    <property type="evidence" value="ECO:0007669"/>
    <property type="project" value="UniProtKB-SubCell"/>
</dbReference>
<dbReference type="GO" id="GO:0008137">
    <property type="term" value="F:NADH dehydrogenase (ubiquinone) activity"/>
    <property type="evidence" value="ECO:0007669"/>
    <property type="project" value="InterPro"/>
</dbReference>
<dbReference type="GO" id="GO:0048038">
    <property type="term" value="F:quinone binding"/>
    <property type="evidence" value="ECO:0007669"/>
    <property type="project" value="UniProtKB-KW"/>
</dbReference>
<dbReference type="GO" id="GO:0042773">
    <property type="term" value="P:ATP synthesis coupled electron transport"/>
    <property type="evidence" value="ECO:0007669"/>
    <property type="project" value="InterPro"/>
</dbReference>
<dbReference type="GO" id="GO:0019684">
    <property type="term" value="P:photosynthesis, light reaction"/>
    <property type="evidence" value="ECO:0007669"/>
    <property type="project" value="UniProtKB-UniRule"/>
</dbReference>
<dbReference type="HAMAP" id="MF_00445">
    <property type="entry name" value="NDH1_NuoN_1"/>
    <property type="match status" value="1"/>
</dbReference>
<dbReference type="InterPro" id="IPR010096">
    <property type="entry name" value="NADH-Q_OxRdtase_suN/2"/>
</dbReference>
<dbReference type="InterPro" id="IPR001750">
    <property type="entry name" value="ND/Mrp_TM"/>
</dbReference>
<dbReference type="InterPro" id="IPR045693">
    <property type="entry name" value="Ndh2_N"/>
</dbReference>
<dbReference type="NCBIfam" id="TIGR01770">
    <property type="entry name" value="NDH_I_N"/>
    <property type="match status" value="1"/>
</dbReference>
<dbReference type="NCBIfam" id="NF002701">
    <property type="entry name" value="PRK02504.1"/>
    <property type="match status" value="1"/>
</dbReference>
<dbReference type="PANTHER" id="PTHR22773">
    <property type="entry name" value="NADH DEHYDROGENASE"/>
    <property type="match status" value="1"/>
</dbReference>
<dbReference type="Pfam" id="PF19530">
    <property type="entry name" value="Ndh2_N"/>
    <property type="match status" value="1"/>
</dbReference>
<dbReference type="Pfam" id="PF00361">
    <property type="entry name" value="Proton_antipo_M"/>
    <property type="match status" value="1"/>
</dbReference>
<feature type="chain" id="PRO_0000391292" description="NAD(P)H-quinone oxidoreductase subunit 2 B, chloroplastic">
    <location>
        <begin position="1"/>
        <end position="510"/>
    </location>
</feature>
<feature type="transmembrane region" description="Helical" evidence="1">
    <location>
        <begin position="26"/>
        <end position="46"/>
    </location>
</feature>
<feature type="transmembrane region" description="Helical" evidence="1">
    <location>
        <begin position="57"/>
        <end position="77"/>
    </location>
</feature>
<feature type="transmembrane region" description="Helical" evidence="1">
    <location>
        <begin position="99"/>
        <end position="119"/>
    </location>
</feature>
<feature type="transmembrane region" description="Helical" evidence="1">
    <location>
        <begin position="124"/>
        <end position="144"/>
    </location>
</feature>
<feature type="transmembrane region" description="Helical" evidence="1">
    <location>
        <begin position="149"/>
        <end position="169"/>
    </location>
</feature>
<feature type="transmembrane region" description="Helical" evidence="1">
    <location>
        <begin position="183"/>
        <end position="203"/>
    </location>
</feature>
<feature type="transmembrane region" description="Helical" evidence="1">
    <location>
        <begin position="227"/>
        <end position="247"/>
    </location>
</feature>
<feature type="transmembrane region" description="Helical" evidence="1">
    <location>
        <begin position="295"/>
        <end position="315"/>
    </location>
</feature>
<feature type="transmembrane region" description="Helical" evidence="1">
    <location>
        <begin position="323"/>
        <end position="342"/>
    </location>
</feature>
<feature type="transmembrane region" description="Helical" evidence="1">
    <location>
        <begin position="354"/>
        <end position="374"/>
    </location>
</feature>
<feature type="transmembrane region" description="Helical" evidence="1">
    <location>
        <begin position="395"/>
        <end position="415"/>
    </location>
</feature>
<feature type="transmembrane region" description="Helical" evidence="1">
    <location>
        <begin position="418"/>
        <end position="438"/>
    </location>
</feature>
<feature type="transmembrane region" description="Helical" evidence="1">
    <location>
        <begin position="484"/>
        <end position="504"/>
    </location>
</feature>
<name>NU2C2_OENBI</name>
<keyword id="KW-0150">Chloroplast</keyword>
<keyword id="KW-0472">Membrane</keyword>
<keyword id="KW-0520">NAD</keyword>
<keyword id="KW-0521">NADP</keyword>
<keyword id="KW-0934">Plastid</keyword>
<keyword id="KW-0618">Plastoquinone</keyword>
<keyword id="KW-0874">Quinone</keyword>
<keyword id="KW-0793">Thylakoid</keyword>
<keyword id="KW-1278">Translocase</keyword>
<keyword id="KW-0812">Transmembrane</keyword>
<keyword id="KW-1133">Transmembrane helix</keyword>
<keyword id="KW-0813">Transport</keyword>
<proteinExistence type="inferred from homology"/>
<geneLocation type="chloroplast"/>
<protein>
    <recommendedName>
        <fullName evidence="1">NAD(P)H-quinone oxidoreductase subunit 2 B, chloroplastic</fullName>
        <ecNumber evidence="1">7.1.1.-</ecNumber>
    </recommendedName>
    <alternativeName>
        <fullName evidence="1">NAD(P)H dehydrogenase, subunit 2 B</fullName>
    </alternativeName>
    <alternativeName>
        <fullName evidence="1">NADH-plastoquinone oxidoreductase subunit 2 B</fullName>
    </alternativeName>
</protein>
<accession>P0CD09</accession>
<accession>B0Z504</accession>
<organism>
    <name type="scientific">Oenothera biennis</name>
    <name type="common">German evening primrose</name>
    <name type="synonym">Onagra biennis</name>
    <dbReference type="NCBI Taxonomy" id="3942"/>
    <lineage>
        <taxon>Eukaryota</taxon>
        <taxon>Viridiplantae</taxon>
        <taxon>Streptophyta</taxon>
        <taxon>Embryophyta</taxon>
        <taxon>Tracheophyta</taxon>
        <taxon>Spermatophyta</taxon>
        <taxon>Magnoliopsida</taxon>
        <taxon>eudicotyledons</taxon>
        <taxon>Gunneridae</taxon>
        <taxon>Pentapetalae</taxon>
        <taxon>rosids</taxon>
        <taxon>malvids</taxon>
        <taxon>Myrtales</taxon>
        <taxon>Onagraceae</taxon>
        <taxon>Onagroideae</taxon>
        <taxon>Onagreae</taxon>
        <taxon>Oenothera</taxon>
    </lineage>
</organism>
<evidence type="ECO:0000255" key="1">
    <source>
        <dbReference type="HAMAP-Rule" id="MF_00445"/>
    </source>
</evidence>